<evidence type="ECO:0000250" key="1">
    <source>
        <dbReference type="UniProtKB" id="P42484"/>
    </source>
</evidence>
<evidence type="ECO:0000305" key="2"/>
<gene>
    <name type="ordered locus">War-079</name>
</gene>
<proteinExistence type="inferred from homology"/>
<keyword id="KW-0240">DNA-directed RNA polymerase</keyword>
<keyword id="KW-1035">Host cytoplasm</keyword>
<keyword id="KW-0804">Transcription</keyword>
<keyword id="KW-1195">Viral transcription</keyword>
<keyword id="KW-0946">Virion</keyword>
<name>RPB6_ASFWA</name>
<organismHost>
    <name type="scientific">Ornithodoros</name>
    <name type="common">relapsing fever ticks</name>
    <dbReference type="NCBI Taxonomy" id="6937"/>
</organismHost>
<organismHost>
    <name type="scientific">Phacochoerus aethiopicus</name>
    <name type="common">Warthog</name>
    <dbReference type="NCBI Taxonomy" id="85517"/>
</organismHost>
<organismHost>
    <name type="scientific">Phacochoerus africanus</name>
    <name type="common">Warthog</name>
    <dbReference type="NCBI Taxonomy" id="41426"/>
</organismHost>
<organismHost>
    <name type="scientific">Potamochoerus larvatus</name>
    <name type="common">Bushpig</name>
    <dbReference type="NCBI Taxonomy" id="273792"/>
</organismHost>
<organismHost>
    <name type="scientific">Sus scrofa</name>
    <name type="common">Pig</name>
    <dbReference type="NCBI Taxonomy" id="9823"/>
</organismHost>
<sequence length="147" mass="16663">MADNDNEDVIMDDLVEEYVETEEENFVDSEEESEDKDEIVESPSICEGFVQASSQTLVIIPDNERITSNVLTTFEATRLVAVRAQQLAINGSTMLKKKYSSPIDIAKQELFNRKIPLLVMRCIKVTPDGQKIVEIWNPREMGIPLLD</sequence>
<protein>
    <recommendedName>
        <fullName evidence="1">DNA-directed RNA polymerase subunit 6 homolog</fullName>
        <shortName evidence="2">RPB6 homolog</shortName>
    </recommendedName>
</protein>
<dbReference type="EMBL" id="AY261366">
    <property type="status" value="NOT_ANNOTATED_CDS"/>
    <property type="molecule type" value="Genomic_DNA"/>
</dbReference>
<dbReference type="SMR" id="P0C9D8"/>
<dbReference type="Proteomes" id="UP000000858">
    <property type="component" value="Segment"/>
</dbReference>
<dbReference type="GO" id="GO:0000428">
    <property type="term" value="C:DNA-directed RNA polymerase complex"/>
    <property type="evidence" value="ECO:0007669"/>
    <property type="project" value="UniProtKB-KW"/>
</dbReference>
<dbReference type="GO" id="GO:0030430">
    <property type="term" value="C:host cell cytoplasm"/>
    <property type="evidence" value="ECO:0007669"/>
    <property type="project" value="UniProtKB-SubCell"/>
</dbReference>
<dbReference type="GO" id="GO:0044423">
    <property type="term" value="C:virion component"/>
    <property type="evidence" value="ECO:0007669"/>
    <property type="project" value="UniProtKB-KW"/>
</dbReference>
<dbReference type="GO" id="GO:0003677">
    <property type="term" value="F:DNA binding"/>
    <property type="evidence" value="ECO:0007669"/>
    <property type="project" value="InterPro"/>
</dbReference>
<dbReference type="GO" id="GO:0003899">
    <property type="term" value="F:DNA-directed RNA polymerase activity"/>
    <property type="evidence" value="ECO:0007669"/>
    <property type="project" value="InterPro"/>
</dbReference>
<dbReference type="GO" id="GO:0006360">
    <property type="term" value="P:transcription by RNA polymerase I"/>
    <property type="evidence" value="ECO:0007669"/>
    <property type="project" value="TreeGrafter"/>
</dbReference>
<dbReference type="GO" id="GO:0006366">
    <property type="term" value="P:transcription by RNA polymerase II"/>
    <property type="evidence" value="ECO:0007669"/>
    <property type="project" value="TreeGrafter"/>
</dbReference>
<dbReference type="GO" id="GO:0042797">
    <property type="term" value="P:tRNA transcription by RNA polymerase III"/>
    <property type="evidence" value="ECO:0007669"/>
    <property type="project" value="TreeGrafter"/>
</dbReference>
<dbReference type="GO" id="GO:0019083">
    <property type="term" value="P:viral transcription"/>
    <property type="evidence" value="ECO:0007669"/>
    <property type="project" value="UniProtKB-KW"/>
</dbReference>
<dbReference type="Gene3D" id="3.90.940.10">
    <property type="match status" value="1"/>
</dbReference>
<dbReference type="InterPro" id="IPR020708">
    <property type="entry name" value="DNA-dir_RNA_polK_14-18kDa_CS"/>
</dbReference>
<dbReference type="InterPro" id="IPR006110">
    <property type="entry name" value="Pol_omega/Rpo6/RPB6"/>
</dbReference>
<dbReference type="InterPro" id="IPR036161">
    <property type="entry name" value="RPB6/omega-like_sf"/>
</dbReference>
<dbReference type="InterPro" id="IPR006111">
    <property type="entry name" value="Rpo6/Rpb6"/>
</dbReference>
<dbReference type="PANTHER" id="PTHR47227">
    <property type="entry name" value="DNA-DIRECTED RNA POLYMERASE SUBUNIT K"/>
    <property type="match status" value="1"/>
</dbReference>
<dbReference type="PANTHER" id="PTHR47227:SF3">
    <property type="entry name" value="RNA POLYMERASE SUBUNIT, PUTATIVE-RELATED"/>
    <property type="match status" value="1"/>
</dbReference>
<dbReference type="Pfam" id="PF01192">
    <property type="entry name" value="RNA_pol_Rpb6"/>
    <property type="match status" value="1"/>
</dbReference>
<dbReference type="PIRSF" id="PIRSF000778">
    <property type="entry name" value="RpoK/RPB6"/>
    <property type="match status" value="1"/>
</dbReference>
<dbReference type="SMART" id="SM01409">
    <property type="entry name" value="RNA_pol_Rpb6"/>
    <property type="match status" value="1"/>
</dbReference>
<dbReference type="SUPFAM" id="SSF63562">
    <property type="entry name" value="RPB6/omega subunit-like"/>
    <property type="match status" value="1"/>
</dbReference>
<dbReference type="PROSITE" id="PS01111">
    <property type="entry name" value="RNA_POL_K_14KD"/>
    <property type="match status" value="1"/>
</dbReference>
<reference key="1">
    <citation type="submission" date="2003-03" db="EMBL/GenBank/DDBJ databases">
        <title>African swine fever virus genomes.</title>
        <authorList>
            <person name="Kutish G.F."/>
            <person name="Rock D.L."/>
        </authorList>
    </citation>
    <scope>NUCLEOTIDE SEQUENCE [LARGE SCALE GENOMIC DNA]</scope>
</reference>
<accession>P0C9D8</accession>
<feature type="chain" id="PRO_0000373154" description="DNA-directed RNA polymerase subunit 6 homolog">
    <location>
        <begin position="1"/>
        <end position="147"/>
    </location>
</feature>
<organism>
    <name type="scientific">African swine fever virus (isolate Warthog/Namibia/Wart80/1980)</name>
    <name type="common">ASFV</name>
    <dbReference type="NCBI Taxonomy" id="561444"/>
    <lineage>
        <taxon>Viruses</taxon>
        <taxon>Varidnaviria</taxon>
        <taxon>Bamfordvirae</taxon>
        <taxon>Nucleocytoviricota</taxon>
        <taxon>Pokkesviricetes</taxon>
        <taxon>Asfuvirales</taxon>
        <taxon>Asfarviridae</taxon>
        <taxon>Asfivirus</taxon>
        <taxon>African swine fever virus</taxon>
    </lineage>
</organism>
<comment type="function">
    <text evidence="1">Component of the DNA-directed RNA polymerase (RNAP) that catalyzes the transcription in the cytoplasm of viral DNA into RNA using the four ribonucleoside triphosphates as substrates.</text>
</comment>
<comment type="subunit">
    <text evidence="1">Part of the viral DNA-directed RNA polymerase that consists of 8 polII-like subunits (RPB1, RPB2, RPB3, RPB5, RPB6, RPB7, RPB9, RPB10), a capping enzyme and a termination factor.</text>
</comment>
<comment type="subcellular location">
    <subcellularLocation>
        <location evidence="2">Host cytoplasm</location>
    </subcellularLocation>
    <subcellularLocation>
        <location evidence="1">Virion</location>
    </subcellularLocation>
    <text evidence="1">Found in association with viral nucleoid.</text>
</comment>
<comment type="similarity">
    <text evidence="2">Belongs to the archaeal RpoK/eukaryotic RPB6 RNA polymerase subunit family.</text>
</comment>